<feature type="chain" id="PRO_0000389926" description="NADH-quinone oxidoreductase subunit K">
    <location>
        <begin position="1"/>
        <end position="99"/>
    </location>
</feature>
<feature type="transmembrane region" description="Helical" evidence="1">
    <location>
        <begin position="2"/>
        <end position="22"/>
    </location>
</feature>
<feature type="transmembrane region" description="Helical" evidence="1">
    <location>
        <begin position="28"/>
        <end position="48"/>
    </location>
</feature>
<feature type="transmembrane region" description="Helical" evidence="1">
    <location>
        <begin position="60"/>
        <end position="80"/>
    </location>
</feature>
<evidence type="ECO:0000255" key="1">
    <source>
        <dbReference type="HAMAP-Rule" id="MF_01456"/>
    </source>
</evidence>
<dbReference type="EC" id="7.1.1.-" evidence="1"/>
<dbReference type="EMBL" id="CP000251">
    <property type="protein sequence ID" value="ABC83961.1"/>
    <property type="molecule type" value="Genomic_DNA"/>
</dbReference>
<dbReference type="RefSeq" id="WP_011423243.1">
    <property type="nucleotide sequence ID" value="NC_007760.1"/>
</dbReference>
<dbReference type="SMR" id="Q2IHA4"/>
<dbReference type="STRING" id="290397.Adeh_4197"/>
<dbReference type="KEGG" id="ade:Adeh_4197"/>
<dbReference type="eggNOG" id="COG0713">
    <property type="taxonomic scope" value="Bacteria"/>
</dbReference>
<dbReference type="HOGENOM" id="CLU_144724_0_0_7"/>
<dbReference type="OrthoDB" id="9810120at2"/>
<dbReference type="Proteomes" id="UP000001935">
    <property type="component" value="Chromosome"/>
</dbReference>
<dbReference type="GO" id="GO:0030964">
    <property type="term" value="C:NADH dehydrogenase complex"/>
    <property type="evidence" value="ECO:0007669"/>
    <property type="project" value="TreeGrafter"/>
</dbReference>
<dbReference type="GO" id="GO:0005886">
    <property type="term" value="C:plasma membrane"/>
    <property type="evidence" value="ECO:0007669"/>
    <property type="project" value="UniProtKB-SubCell"/>
</dbReference>
<dbReference type="GO" id="GO:0050136">
    <property type="term" value="F:NADH:ubiquinone reductase (non-electrogenic) activity"/>
    <property type="evidence" value="ECO:0007669"/>
    <property type="project" value="UniProtKB-UniRule"/>
</dbReference>
<dbReference type="GO" id="GO:0048038">
    <property type="term" value="F:quinone binding"/>
    <property type="evidence" value="ECO:0007669"/>
    <property type="project" value="UniProtKB-KW"/>
</dbReference>
<dbReference type="GO" id="GO:0042773">
    <property type="term" value="P:ATP synthesis coupled electron transport"/>
    <property type="evidence" value="ECO:0007669"/>
    <property type="project" value="InterPro"/>
</dbReference>
<dbReference type="FunFam" id="1.10.287.3510:FF:000001">
    <property type="entry name" value="NADH-quinone oxidoreductase subunit K"/>
    <property type="match status" value="1"/>
</dbReference>
<dbReference type="Gene3D" id="1.10.287.3510">
    <property type="match status" value="1"/>
</dbReference>
<dbReference type="HAMAP" id="MF_01456">
    <property type="entry name" value="NDH1_NuoK"/>
    <property type="match status" value="1"/>
</dbReference>
<dbReference type="InterPro" id="IPR001133">
    <property type="entry name" value="NADH_UbQ_OxRdtase_chain4L/K"/>
</dbReference>
<dbReference type="InterPro" id="IPR039428">
    <property type="entry name" value="NUOK/Mnh_C1-like"/>
</dbReference>
<dbReference type="NCBIfam" id="NF004320">
    <property type="entry name" value="PRK05715.1-2"/>
    <property type="match status" value="1"/>
</dbReference>
<dbReference type="NCBIfam" id="NF004321">
    <property type="entry name" value="PRK05715.1-3"/>
    <property type="match status" value="1"/>
</dbReference>
<dbReference type="NCBIfam" id="NF004323">
    <property type="entry name" value="PRK05715.1-5"/>
    <property type="match status" value="1"/>
</dbReference>
<dbReference type="PANTHER" id="PTHR11434:SF16">
    <property type="entry name" value="NADH-UBIQUINONE OXIDOREDUCTASE CHAIN 4L"/>
    <property type="match status" value="1"/>
</dbReference>
<dbReference type="PANTHER" id="PTHR11434">
    <property type="entry name" value="NADH-UBIQUINONE OXIDOREDUCTASE SUBUNIT ND4L"/>
    <property type="match status" value="1"/>
</dbReference>
<dbReference type="Pfam" id="PF00420">
    <property type="entry name" value="Oxidored_q2"/>
    <property type="match status" value="1"/>
</dbReference>
<sequence>MPVEYYLWLASILFGIGLLGVLTKRNALILMMSVELMLNAANLTFLAFARRSGDVAGHAIAFFVIAVAAAEAAVGLAVVIAIYRSRGAINVDEVRVLSE</sequence>
<accession>Q2IHA4</accession>
<organism>
    <name type="scientific">Anaeromyxobacter dehalogenans (strain 2CP-C)</name>
    <dbReference type="NCBI Taxonomy" id="290397"/>
    <lineage>
        <taxon>Bacteria</taxon>
        <taxon>Pseudomonadati</taxon>
        <taxon>Myxococcota</taxon>
        <taxon>Myxococcia</taxon>
        <taxon>Myxococcales</taxon>
        <taxon>Cystobacterineae</taxon>
        <taxon>Anaeromyxobacteraceae</taxon>
        <taxon>Anaeromyxobacter</taxon>
    </lineage>
</organism>
<name>NUOK_ANADE</name>
<comment type="function">
    <text evidence="1">NDH-1 shuttles electrons from NADH, via FMN and iron-sulfur (Fe-S) centers, to quinones in the respiratory chain. The immediate electron acceptor for the enzyme in this species is believed to be ubiquinone. Couples the redox reaction to proton translocation (for every two electrons transferred, four hydrogen ions are translocated across the cytoplasmic membrane), and thus conserves the redox energy in a proton gradient.</text>
</comment>
<comment type="catalytic activity">
    <reaction evidence="1">
        <text>a quinone + NADH + 5 H(+)(in) = a quinol + NAD(+) + 4 H(+)(out)</text>
        <dbReference type="Rhea" id="RHEA:57888"/>
        <dbReference type="ChEBI" id="CHEBI:15378"/>
        <dbReference type="ChEBI" id="CHEBI:24646"/>
        <dbReference type="ChEBI" id="CHEBI:57540"/>
        <dbReference type="ChEBI" id="CHEBI:57945"/>
        <dbReference type="ChEBI" id="CHEBI:132124"/>
    </reaction>
</comment>
<comment type="subunit">
    <text evidence="1">NDH-1 is composed of 14 different subunits. Subunits NuoA, H, J, K, L, M, N constitute the membrane sector of the complex.</text>
</comment>
<comment type="subcellular location">
    <subcellularLocation>
        <location evidence="1">Cell inner membrane</location>
        <topology evidence="1">Multi-pass membrane protein</topology>
    </subcellularLocation>
</comment>
<comment type="similarity">
    <text evidence="1">Belongs to the complex I subunit 4L family.</text>
</comment>
<protein>
    <recommendedName>
        <fullName evidence="1">NADH-quinone oxidoreductase subunit K</fullName>
        <ecNumber evidence="1">7.1.1.-</ecNumber>
    </recommendedName>
    <alternativeName>
        <fullName evidence="1">NADH dehydrogenase I subunit K</fullName>
    </alternativeName>
    <alternativeName>
        <fullName evidence="1">NDH-1 subunit K</fullName>
    </alternativeName>
</protein>
<keyword id="KW-0997">Cell inner membrane</keyword>
<keyword id="KW-1003">Cell membrane</keyword>
<keyword id="KW-0472">Membrane</keyword>
<keyword id="KW-0520">NAD</keyword>
<keyword id="KW-0874">Quinone</keyword>
<keyword id="KW-1185">Reference proteome</keyword>
<keyword id="KW-1278">Translocase</keyword>
<keyword id="KW-0812">Transmembrane</keyword>
<keyword id="KW-1133">Transmembrane helix</keyword>
<keyword id="KW-0813">Transport</keyword>
<keyword id="KW-0830">Ubiquinone</keyword>
<gene>
    <name evidence="1" type="primary">nuoK</name>
    <name type="ordered locus">Adeh_4197</name>
</gene>
<proteinExistence type="inferred from homology"/>
<reference key="1">
    <citation type="submission" date="2006-01" db="EMBL/GenBank/DDBJ databases">
        <title>Complete sequence of Anaeromyxobacter dehalogenans 2CP-C.</title>
        <authorList>
            <person name="Copeland A."/>
            <person name="Lucas S."/>
            <person name="Lapidus A."/>
            <person name="Barry K."/>
            <person name="Detter J.C."/>
            <person name="Glavina T."/>
            <person name="Hammon N."/>
            <person name="Israni S."/>
            <person name="Pitluck S."/>
            <person name="Brettin T."/>
            <person name="Bruce D."/>
            <person name="Han C."/>
            <person name="Tapia R."/>
            <person name="Gilna P."/>
            <person name="Kiss H."/>
            <person name="Schmutz J."/>
            <person name="Larimer F."/>
            <person name="Land M."/>
            <person name="Kyrpides N."/>
            <person name="Anderson I."/>
            <person name="Sanford R.A."/>
            <person name="Ritalahti K.M."/>
            <person name="Thomas H.S."/>
            <person name="Kirby J.R."/>
            <person name="Zhulin I.B."/>
            <person name="Loeffler F.E."/>
            <person name="Richardson P."/>
        </authorList>
    </citation>
    <scope>NUCLEOTIDE SEQUENCE [LARGE SCALE GENOMIC DNA]</scope>
    <source>
        <strain>2CP-C</strain>
    </source>
</reference>